<keyword id="KW-0963">Cytoplasm</keyword>
<keyword id="KW-0671">Queuosine biosynthesis</keyword>
<keyword id="KW-1185">Reference proteome</keyword>
<keyword id="KW-0949">S-adenosyl-L-methionine</keyword>
<keyword id="KW-0808">Transferase</keyword>
<comment type="function">
    <text evidence="1">Transfers and isomerizes the ribose moiety from AdoMet to the 7-aminomethyl group of 7-deazaguanine (preQ1-tRNA) to give epoxyqueuosine (oQ-tRNA).</text>
</comment>
<comment type="catalytic activity">
    <reaction evidence="1">
        <text>7-aminomethyl-7-carbaguanosine(34) in tRNA + S-adenosyl-L-methionine = epoxyqueuosine(34) in tRNA + adenine + L-methionine + 2 H(+)</text>
        <dbReference type="Rhea" id="RHEA:32155"/>
        <dbReference type="Rhea" id="RHEA-COMP:10342"/>
        <dbReference type="Rhea" id="RHEA-COMP:18582"/>
        <dbReference type="ChEBI" id="CHEBI:15378"/>
        <dbReference type="ChEBI" id="CHEBI:16708"/>
        <dbReference type="ChEBI" id="CHEBI:57844"/>
        <dbReference type="ChEBI" id="CHEBI:59789"/>
        <dbReference type="ChEBI" id="CHEBI:82833"/>
        <dbReference type="ChEBI" id="CHEBI:194443"/>
        <dbReference type="EC" id="2.4.99.17"/>
    </reaction>
</comment>
<comment type="pathway">
    <text evidence="1">tRNA modification; tRNA-queuosine biosynthesis.</text>
</comment>
<comment type="subunit">
    <text evidence="1">Monomer.</text>
</comment>
<comment type="subcellular location">
    <subcellularLocation>
        <location evidence="1">Cytoplasm</location>
    </subcellularLocation>
</comment>
<comment type="similarity">
    <text evidence="1">Belongs to the QueA family.</text>
</comment>
<gene>
    <name evidence="1" type="primary">queA</name>
    <name type="ordered locus">Ctha_2475</name>
</gene>
<sequence>MRLSDFRYTLPKTAVAEYPSEPRDSCKLMVLDRRKKTTDHKQFSDLLDYFKKGDVLVLNDTKVFPARLYGNKEKTSAKIEVFLLRELNKQAGLWDVLVEPARKVRVGNKIYFPNDLVAEVVDNTTSRGRTIRFLNPDIDIFSIVEKVGQMPIPPYIKRDPEEEDKERYQTVFARIPGAVVAPLAGLHFTNPLLKAIQDKGVEIISLTLHPGLSTFREVEVEDISKHKMDSEYYNVPYSCAKVINSIKEKKSGRVFAVGTTVCRALEANATVEGRIKFGEGWTDKYIYPPYDFKVVDALITNFHQPESTLLMLVSAFAEHDFLMKNYKLALKSDYKFLGYGDAMLIF</sequence>
<proteinExistence type="inferred from homology"/>
<reference key="1">
    <citation type="submission" date="2008-06" db="EMBL/GenBank/DDBJ databases">
        <title>Complete sequence of Chloroherpeton thalassium ATCC 35110.</title>
        <authorList>
            <consortium name="US DOE Joint Genome Institute"/>
            <person name="Lucas S."/>
            <person name="Copeland A."/>
            <person name="Lapidus A."/>
            <person name="Glavina del Rio T."/>
            <person name="Dalin E."/>
            <person name="Tice H."/>
            <person name="Bruce D."/>
            <person name="Goodwin L."/>
            <person name="Pitluck S."/>
            <person name="Schmutz J."/>
            <person name="Larimer F."/>
            <person name="Land M."/>
            <person name="Hauser L."/>
            <person name="Kyrpides N."/>
            <person name="Mikhailova N."/>
            <person name="Liu Z."/>
            <person name="Li T."/>
            <person name="Zhao F."/>
            <person name="Overmann J."/>
            <person name="Bryant D.A."/>
            <person name="Richardson P."/>
        </authorList>
    </citation>
    <scope>NUCLEOTIDE SEQUENCE [LARGE SCALE GENOMIC DNA]</scope>
    <source>
        <strain>ATCC 35110 / GB-78</strain>
    </source>
</reference>
<organism>
    <name type="scientific">Chloroherpeton thalassium (strain ATCC 35110 / GB-78)</name>
    <dbReference type="NCBI Taxonomy" id="517418"/>
    <lineage>
        <taxon>Bacteria</taxon>
        <taxon>Pseudomonadati</taxon>
        <taxon>Chlorobiota</taxon>
        <taxon>Chlorobiia</taxon>
        <taxon>Chlorobiales</taxon>
        <taxon>Chloroherpetonaceae</taxon>
        <taxon>Chloroherpeton</taxon>
    </lineage>
</organism>
<protein>
    <recommendedName>
        <fullName evidence="1">S-adenosylmethionine:tRNA ribosyltransferase-isomerase</fullName>
        <ecNumber evidence="1">2.4.99.17</ecNumber>
    </recommendedName>
    <alternativeName>
        <fullName evidence="1">Queuosine biosynthesis protein QueA</fullName>
    </alternativeName>
</protein>
<feature type="chain" id="PRO_1000094764" description="S-adenosylmethionine:tRNA ribosyltransferase-isomerase">
    <location>
        <begin position="1"/>
        <end position="346"/>
    </location>
</feature>
<accession>B3QXK9</accession>
<evidence type="ECO:0000255" key="1">
    <source>
        <dbReference type="HAMAP-Rule" id="MF_00113"/>
    </source>
</evidence>
<dbReference type="EC" id="2.4.99.17" evidence="1"/>
<dbReference type="EMBL" id="CP001100">
    <property type="protein sequence ID" value="ACF14924.1"/>
    <property type="molecule type" value="Genomic_DNA"/>
</dbReference>
<dbReference type="RefSeq" id="WP_012501006.1">
    <property type="nucleotide sequence ID" value="NC_011026.1"/>
</dbReference>
<dbReference type="SMR" id="B3QXK9"/>
<dbReference type="STRING" id="517418.Ctha_2475"/>
<dbReference type="KEGG" id="cts:Ctha_2475"/>
<dbReference type="eggNOG" id="COG0809">
    <property type="taxonomic scope" value="Bacteria"/>
</dbReference>
<dbReference type="HOGENOM" id="CLU_039110_1_0_10"/>
<dbReference type="OrthoDB" id="9805933at2"/>
<dbReference type="UniPathway" id="UPA00392"/>
<dbReference type="Proteomes" id="UP000001208">
    <property type="component" value="Chromosome"/>
</dbReference>
<dbReference type="GO" id="GO:0005737">
    <property type="term" value="C:cytoplasm"/>
    <property type="evidence" value="ECO:0007669"/>
    <property type="project" value="UniProtKB-SubCell"/>
</dbReference>
<dbReference type="GO" id="GO:0051075">
    <property type="term" value="F:S-adenosylmethionine:tRNA ribosyltransferase-isomerase activity"/>
    <property type="evidence" value="ECO:0007669"/>
    <property type="project" value="UniProtKB-EC"/>
</dbReference>
<dbReference type="GO" id="GO:0008616">
    <property type="term" value="P:queuosine biosynthetic process"/>
    <property type="evidence" value="ECO:0007669"/>
    <property type="project" value="UniProtKB-UniRule"/>
</dbReference>
<dbReference type="GO" id="GO:0002099">
    <property type="term" value="P:tRNA wobble guanine modification"/>
    <property type="evidence" value="ECO:0007669"/>
    <property type="project" value="TreeGrafter"/>
</dbReference>
<dbReference type="FunFam" id="2.40.10.240:FF:000002">
    <property type="entry name" value="S-adenosylmethionine:tRNA ribosyltransferase-isomerase"/>
    <property type="match status" value="1"/>
</dbReference>
<dbReference type="Gene3D" id="2.40.10.240">
    <property type="entry name" value="QueA-like"/>
    <property type="match status" value="1"/>
</dbReference>
<dbReference type="Gene3D" id="3.40.1780.10">
    <property type="entry name" value="QueA-like"/>
    <property type="match status" value="1"/>
</dbReference>
<dbReference type="HAMAP" id="MF_00113">
    <property type="entry name" value="QueA"/>
    <property type="match status" value="1"/>
</dbReference>
<dbReference type="InterPro" id="IPR003699">
    <property type="entry name" value="QueA"/>
</dbReference>
<dbReference type="InterPro" id="IPR042118">
    <property type="entry name" value="QueA_dom1"/>
</dbReference>
<dbReference type="InterPro" id="IPR042119">
    <property type="entry name" value="QueA_dom2"/>
</dbReference>
<dbReference type="InterPro" id="IPR036100">
    <property type="entry name" value="QueA_sf"/>
</dbReference>
<dbReference type="NCBIfam" id="NF001140">
    <property type="entry name" value="PRK00147.1"/>
    <property type="match status" value="1"/>
</dbReference>
<dbReference type="NCBIfam" id="TIGR00113">
    <property type="entry name" value="queA"/>
    <property type="match status" value="1"/>
</dbReference>
<dbReference type="PANTHER" id="PTHR30307">
    <property type="entry name" value="S-ADENOSYLMETHIONINE:TRNA RIBOSYLTRANSFERASE-ISOMERASE"/>
    <property type="match status" value="1"/>
</dbReference>
<dbReference type="PANTHER" id="PTHR30307:SF0">
    <property type="entry name" value="S-ADENOSYLMETHIONINE:TRNA RIBOSYLTRANSFERASE-ISOMERASE"/>
    <property type="match status" value="1"/>
</dbReference>
<dbReference type="Pfam" id="PF02547">
    <property type="entry name" value="Queuosine_synth"/>
    <property type="match status" value="1"/>
</dbReference>
<dbReference type="SUPFAM" id="SSF111337">
    <property type="entry name" value="QueA-like"/>
    <property type="match status" value="1"/>
</dbReference>
<name>QUEA_CHLT3</name>